<gene>
    <name evidence="1" type="primary">proS</name>
    <name type="ordered locus">str0200</name>
</gene>
<comment type="function">
    <text evidence="1">Catalyzes the attachment of proline to tRNA(Pro) in a two-step reaction: proline is first activated by ATP to form Pro-AMP and then transferred to the acceptor end of tRNA(Pro). As ProRS can inadvertently accommodate and process non-cognate amino acids such as alanine and cysteine, to avoid such errors it has two additional distinct editing activities against alanine. One activity is designated as 'pretransfer' editing and involves the tRNA(Pro)-independent hydrolysis of activated Ala-AMP. The other activity is designated 'posttransfer' editing and involves deacylation of mischarged Ala-tRNA(Pro). The misacylated Cys-tRNA(Pro) is not edited by ProRS.</text>
</comment>
<comment type="catalytic activity">
    <reaction evidence="1">
        <text>tRNA(Pro) + L-proline + ATP = L-prolyl-tRNA(Pro) + AMP + diphosphate</text>
        <dbReference type="Rhea" id="RHEA:14305"/>
        <dbReference type="Rhea" id="RHEA-COMP:9700"/>
        <dbReference type="Rhea" id="RHEA-COMP:9702"/>
        <dbReference type="ChEBI" id="CHEBI:30616"/>
        <dbReference type="ChEBI" id="CHEBI:33019"/>
        <dbReference type="ChEBI" id="CHEBI:60039"/>
        <dbReference type="ChEBI" id="CHEBI:78442"/>
        <dbReference type="ChEBI" id="CHEBI:78532"/>
        <dbReference type="ChEBI" id="CHEBI:456215"/>
        <dbReference type="EC" id="6.1.1.15"/>
    </reaction>
</comment>
<comment type="subunit">
    <text evidence="1">Homodimer.</text>
</comment>
<comment type="subcellular location">
    <subcellularLocation>
        <location evidence="1">Cytoplasm</location>
    </subcellularLocation>
</comment>
<comment type="domain">
    <text evidence="1">Consists of three domains: the N-terminal catalytic domain, the editing domain and the C-terminal anticodon-binding domain.</text>
</comment>
<comment type="similarity">
    <text evidence="1">Belongs to the class-II aminoacyl-tRNA synthetase family. ProS type 1 subfamily.</text>
</comment>
<accession>Q5M1N3</accession>
<keyword id="KW-0030">Aminoacyl-tRNA synthetase</keyword>
<keyword id="KW-0067">ATP-binding</keyword>
<keyword id="KW-0963">Cytoplasm</keyword>
<keyword id="KW-0436">Ligase</keyword>
<keyword id="KW-0547">Nucleotide-binding</keyword>
<keyword id="KW-0648">Protein biosynthesis</keyword>
<name>SYP_STRT1</name>
<reference key="1">
    <citation type="journal article" date="2004" name="Nat. Biotechnol.">
        <title>Complete sequence and comparative genome analysis of the dairy bacterium Streptococcus thermophilus.</title>
        <authorList>
            <person name="Bolotin A."/>
            <person name="Quinquis B."/>
            <person name="Renault P."/>
            <person name="Sorokin A."/>
            <person name="Ehrlich S.D."/>
            <person name="Kulakauskas S."/>
            <person name="Lapidus A."/>
            <person name="Goltsman E."/>
            <person name="Mazur M."/>
            <person name="Pusch G.D."/>
            <person name="Fonstein M."/>
            <person name="Overbeek R."/>
            <person name="Kyprides N."/>
            <person name="Purnelle B."/>
            <person name="Prozzi D."/>
            <person name="Ngui K."/>
            <person name="Masuy D."/>
            <person name="Hancy F."/>
            <person name="Burteau S."/>
            <person name="Boutry M."/>
            <person name="Delcour J."/>
            <person name="Goffeau A."/>
            <person name="Hols P."/>
        </authorList>
    </citation>
    <scope>NUCLEOTIDE SEQUENCE [LARGE SCALE GENOMIC DNA]</scope>
    <source>
        <strain>CNRZ 1066</strain>
    </source>
</reference>
<feature type="chain" id="PRO_0000248789" description="Proline--tRNA ligase">
    <location>
        <begin position="1"/>
        <end position="620"/>
    </location>
</feature>
<dbReference type="EC" id="6.1.1.15" evidence="1"/>
<dbReference type="EMBL" id="CP000024">
    <property type="protein sequence ID" value="AAV61814.1"/>
    <property type="molecule type" value="Genomic_DNA"/>
</dbReference>
<dbReference type="SMR" id="Q5M1N3"/>
<dbReference type="KEGG" id="stc:str0200"/>
<dbReference type="HOGENOM" id="CLU_016739_0_0_9"/>
<dbReference type="GO" id="GO:0005829">
    <property type="term" value="C:cytosol"/>
    <property type="evidence" value="ECO:0007669"/>
    <property type="project" value="TreeGrafter"/>
</dbReference>
<dbReference type="GO" id="GO:0002161">
    <property type="term" value="F:aminoacyl-tRNA deacylase activity"/>
    <property type="evidence" value="ECO:0007669"/>
    <property type="project" value="InterPro"/>
</dbReference>
<dbReference type="GO" id="GO:0005524">
    <property type="term" value="F:ATP binding"/>
    <property type="evidence" value="ECO:0007669"/>
    <property type="project" value="UniProtKB-UniRule"/>
</dbReference>
<dbReference type="GO" id="GO:0140096">
    <property type="term" value="F:catalytic activity, acting on a protein"/>
    <property type="evidence" value="ECO:0007669"/>
    <property type="project" value="UniProtKB-ARBA"/>
</dbReference>
<dbReference type="GO" id="GO:0004827">
    <property type="term" value="F:proline-tRNA ligase activity"/>
    <property type="evidence" value="ECO:0007669"/>
    <property type="project" value="UniProtKB-UniRule"/>
</dbReference>
<dbReference type="GO" id="GO:0016740">
    <property type="term" value="F:transferase activity"/>
    <property type="evidence" value="ECO:0007669"/>
    <property type="project" value="UniProtKB-ARBA"/>
</dbReference>
<dbReference type="GO" id="GO:0006433">
    <property type="term" value="P:prolyl-tRNA aminoacylation"/>
    <property type="evidence" value="ECO:0007669"/>
    <property type="project" value="UniProtKB-UniRule"/>
</dbReference>
<dbReference type="CDD" id="cd04334">
    <property type="entry name" value="ProRS-INS"/>
    <property type="match status" value="1"/>
</dbReference>
<dbReference type="CDD" id="cd00861">
    <property type="entry name" value="ProRS_anticodon_short"/>
    <property type="match status" value="1"/>
</dbReference>
<dbReference type="FunFam" id="3.40.50.800:FF:000011">
    <property type="entry name" value="Proline--tRNA ligase"/>
    <property type="match status" value="1"/>
</dbReference>
<dbReference type="Gene3D" id="3.40.50.800">
    <property type="entry name" value="Anticodon-binding domain"/>
    <property type="match status" value="1"/>
</dbReference>
<dbReference type="Gene3D" id="3.30.930.10">
    <property type="entry name" value="Bira Bifunctional Protein, Domain 2"/>
    <property type="match status" value="2"/>
</dbReference>
<dbReference type="Gene3D" id="3.90.960.10">
    <property type="entry name" value="YbaK/aminoacyl-tRNA synthetase-associated domain"/>
    <property type="match status" value="1"/>
</dbReference>
<dbReference type="HAMAP" id="MF_01569">
    <property type="entry name" value="Pro_tRNA_synth_type1"/>
    <property type="match status" value="1"/>
</dbReference>
<dbReference type="InterPro" id="IPR002314">
    <property type="entry name" value="aa-tRNA-synt_IIb"/>
</dbReference>
<dbReference type="InterPro" id="IPR006195">
    <property type="entry name" value="aa-tRNA-synth_II"/>
</dbReference>
<dbReference type="InterPro" id="IPR045864">
    <property type="entry name" value="aa-tRNA-synth_II/BPL/LPL"/>
</dbReference>
<dbReference type="InterPro" id="IPR004154">
    <property type="entry name" value="Anticodon-bd"/>
</dbReference>
<dbReference type="InterPro" id="IPR036621">
    <property type="entry name" value="Anticodon-bd_dom_sf"/>
</dbReference>
<dbReference type="InterPro" id="IPR002316">
    <property type="entry name" value="Pro-tRNA-ligase_IIa"/>
</dbReference>
<dbReference type="InterPro" id="IPR004500">
    <property type="entry name" value="Pro-tRNA-synth_IIa_bac-type"/>
</dbReference>
<dbReference type="InterPro" id="IPR023717">
    <property type="entry name" value="Pro-tRNA-Synthase_IIa_type1"/>
</dbReference>
<dbReference type="InterPro" id="IPR050062">
    <property type="entry name" value="Pro-tRNA_synthetase"/>
</dbReference>
<dbReference type="InterPro" id="IPR044140">
    <property type="entry name" value="ProRS_anticodon_short"/>
</dbReference>
<dbReference type="InterPro" id="IPR036754">
    <property type="entry name" value="YbaK/aa-tRNA-synt-asso_dom_sf"/>
</dbReference>
<dbReference type="InterPro" id="IPR007214">
    <property type="entry name" value="YbaK/aa-tRNA-synth-assoc-dom"/>
</dbReference>
<dbReference type="NCBIfam" id="NF006625">
    <property type="entry name" value="PRK09194.1"/>
    <property type="match status" value="1"/>
</dbReference>
<dbReference type="NCBIfam" id="TIGR00409">
    <property type="entry name" value="proS_fam_II"/>
    <property type="match status" value="2"/>
</dbReference>
<dbReference type="PANTHER" id="PTHR42753">
    <property type="entry name" value="MITOCHONDRIAL RIBOSOME PROTEIN L39/PROLYL-TRNA LIGASE FAMILY MEMBER"/>
    <property type="match status" value="1"/>
</dbReference>
<dbReference type="PANTHER" id="PTHR42753:SF2">
    <property type="entry name" value="PROLINE--TRNA LIGASE"/>
    <property type="match status" value="1"/>
</dbReference>
<dbReference type="Pfam" id="PF03129">
    <property type="entry name" value="HGTP_anticodon"/>
    <property type="match status" value="1"/>
</dbReference>
<dbReference type="Pfam" id="PF00587">
    <property type="entry name" value="tRNA-synt_2b"/>
    <property type="match status" value="1"/>
</dbReference>
<dbReference type="Pfam" id="PF04073">
    <property type="entry name" value="tRNA_edit"/>
    <property type="match status" value="1"/>
</dbReference>
<dbReference type="PRINTS" id="PR01046">
    <property type="entry name" value="TRNASYNTHPRO"/>
</dbReference>
<dbReference type="SUPFAM" id="SSF52954">
    <property type="entry name" value="Class II aaRS ABD-related"/>
    <property type="match status" value="1"/>
</dbReference>
<dbReference type="SUPFAM" id="SSF55681">
    <property type="entry name" value="Class II aaRS and biotin synthetases"/>
    <property type="match status" value="1"/>
</dbReference>
<dbReference type="SUPFAM" id="SSF55826">
    <property type="entry name" value="YbaK/ProRS associated domain"/>
    <property type="match status" value="1"/>
</dbReference>
<dbReference type="PROSITE" id="PS50862">
    <property type="entry name" value="AA_TRNA_LIGASE_II"/>
    <property type="match status" value="1"/>
</dbReference>
<proteinExistence type="inferred from homology"/>
<protein>
    <recommendedName>
        <fullName evidence="1">Proline--tRNA ligase</fullName>
        <ecNumber evidence="1">6.1.1.15</ecNumber>
    </recommendedName>
    <alternativeName>
        <fullName evidence="1">Prolyl-tRNA synthetase</fullName>
        <shortName evidence="1">ProRS</shortName>
    </alternativeName>
</protein>
<sequence>MKQSKMLIPTLREMPSDAQVISHALMVRAGYVRQVSAGIYAYMPLANRAIEKFKTIMREEFEKIGAVEMLAPALLTADLWRESGRYETYGEDLYKLKNRDKSDFILGPTHEETFTVLVRDAVKSYKQLPLNLYQIQSKYRDEKRPRNGLLRTREFIMKDAYSFHQNYEDLDVTYEDYRKAYEAIFTRAGLEFKAIIGDGGAMGGKDSQEFMAVTPERTDLNRWVVLDKSIASLDEIPEDVMEEIKNELTSWLVAGEDTIAYSTESSYAANLEMATNAYTPATKVVTQEEVSRVETPGCKSIDDVAAFLNIPEEQTIKTLLFTADDEPVVALLVGNDQVNDVKLKNYLAADFLKPATEDEARQVFGANFGSLGPVNLPENVRIIADRKVQDVANAVVGANEDGYHLTGVNPERDFKAEYVDIRKVKEGEISPDGQGVLQFARGIEIGHIFKLGTRYSESMGANVLDENGRAVPIIMGCYGIGVSRILSAVIEQHARLFVNKTPKGQYRYAWGINFPKELAPYDVHLITVNTKDEEANALTDRLEAALAAEGYDVLIDDRNERVGSKFSDSDLIGLPIRVTVGKKASEGVVEVKIKATGDTIEVNADNLIETLAILTTEQDA</sequence>
<evidence type="ECO:0000255" key="1">
    <source>
        <dbReference type="HAMAP-Rule" id="MF_01569"/>
    </source>
</evidence>
<organism>
    <name type="scientific">Streptococcus thermophilus (strain CNRZ 1066)</name>
    <dbReference type="NCBI Taxonomy" id="299768"/>
    <lineage>
        <taxon>Bacteria</taxon>
        <taxon>Bacillati</taxon>
        <taxon>Bacillota</taxon>
        <taxon>Bacilli</taxon>
        <taxon>Lactobacillales</taxon>
        <taxon>Streptococcaceae</taxon>
        <taxon>Streptococcus</taxon>
    </lineage>
</organism>